<organism>
    <name type="scientific">Ureaplasma parvum serovar 3 (strain ATCC 700970)</name>
    <dbReference type="NCBI Taxonomy" id="273119"/>
    <lineage>
        <taxon>Bacteria</taxon>
        <taxon>Bacillati</taxon>
        <taxon>Mycoplasmatota</taxon>
        <taxon>Mycoplasmoidales</taxon>
        <taxon>Mycoplasmoidaceae</taxon>
        <taxon>Ureaplasma</taxon>
    </lineage>
</organism>
<gene>
    <name type="primary">hup</name>
    <name type="ordered locus">UU282</name>
</gene>
<feature type="chain" id="PRO_0000104992" description="DNA-binding protein HU">
    <location>
        <begin position="1"/>
        <end position="130"/>
    </location>
</feature>
<reference key="1">
    <citation type="journal article" date="2000" name="Nature">
        <title>The complete sequence of the mucosal pathogen Ureaplasma urealyticum.</title>
        <authorList>
            <person name="Glass J.I."/>
            <person name="Lefkowitz E.J."/>
            <person name="Glass J.S."/>
            <person name="Heiner C.R."/>
            <person name="Chen E.Y."/>
            <person name="Cassell G.H."/>
        </authorList>
    </citation>
    <scope>NUCLEOTIDE SEQUENCE [LARGE SCALE GENOMIC DNA]</scope>
    <source>
        <strain>ATCC 700970</strain>
    </source>
</reference>
<dbReference type="EMBL" id="AF222894">
    <property type="protein sequence ID" value="AAF30691.1"/>
    <property type="molecule type" value="Genomic_DNA"/>
</dbReference>
<dbReference type="RefSeq" id="WP_006688857.1">
    <property type="nucleotide sequence ID" value="NC_002162.1"/>
</dbReference>
<dbReference type="SMR" id="Q9PQK9"/>
<dbReference type="STRING" id="273119.UU282"/>
<dbReference type="EnsemblBacteria" id="AAF30691">
    <property type="protein sequence ID" value="AAF30691"/>
    <property type="gene ID" value="UU282"/>
</dbReference>
<dbReference type="GeneID" id="29672426"/>
<dbReference type="KEGG" id="uur:UU282"/>
<dbReference type="eggNOG" id="COG0776">
    <property type="taxonomic scope" value="Bacteria"/>
</dbReference>
<dbReference type="HOGENOM" id="CLU_105066_2_2_14"/>
<dbReference type="OrthoDB" id="9799835at2"/>
<dbReference type="Proteomes" id="UP000000423">
    <property type="component" value="Chromosome"/>
</dbReference>
<dbReference type="GO" id="GO:0003677">
    <property type="term" value="F:DNA binding"/>
    <property type="evidence" value="ECO:0007669"/>
    <property type="project" value="UniProtKB-KW"/>
</dbReference>
<dbReference type="GO" id="GO:0030527">
    <property type="term" value="F:structural constituent of chromatin"/>
    <property type="evidence" value="ECO:0007669"/>
    <property type="project" value="InterPro"/>
</dbReference>
<dbReference type="GO" id="GO:0030261">
    <property type="term" value="P:chromosome condensation"/>
    <property type="evidence" value="ECO:0007669"/>
    <property type="project" value="UniProtKB-KW"/>
</dbReference>
<dbReference type="CDD" id="cd00591">
    <property type="entry name" value="HU_IHF"/>
    <property type="match status" value="1"/>
</dbReference>
<dbReference type="Gene3D" id="4.10.520.10">
    <property type="entry name" value="IHF-like DNA-binding proteins"/>
    <property type="match status" value="1"/>
</dbReference>
<dbReference type="InterPro" id="IPR000119">
    <property type="entry name" value="Hist_DNA-bd"/>
</dbReference>
<dbReference type="InterPro" id="IPR010992">
    <property type="entry name" value="IHF-like_DNA-bd_dom_sf"/>
</dbReference>
<dbReference type="PANTHER" id="PTHR33175">
    <property type="entry name" value="DNA-BINDING PROTEIN HU"/>
    <property type="match status" value="1"/>
</dbReference>
<dbReference type="PANTHER" id="PTHR33175:SF3">
    <property type="entry name" value="DNA-BINDING PROTEIN HU-BETA"/>
    <property type="match status" value="1"/>
</dbReference>
<dbReference type="Pfam" id="PF00216">
    <property type="entry name" value="Bac_DNA_binding"/>
    <property type="match status" value="1"/>
</dbReference>
<dbReference type="PRINTS" id="PR01727">
    <property type="entry name" value="DNABINDINGHU"/>
</dbReference>
<dbReference type="SMART" id="SM00411">
    <property type="entry name" value="BHL"/>
    <property type="match status" value="1"/>
</dbReference>
<dbReference type="SUPFAM" id="SSF47729">
    <property type="entry name" value="IHF-like DNA-binding proteins"/>
    <property type="match status" value="1"/>
</dbReference>
<accession>Q9PQK9</accession>
<evidence type="ECO:0000250" key="1"/>
<evidence type="ECO:0000305" key="2"/>
<protein>
    <recommendedName>
        <fullName>DNA-binding protein HU</fullName>
    </recommendedName>
</protein>
<comment type="function">
    <text evidence="1">Histone-like DNA-binding protein which is capable of wrapping DNA to stabilize it, and thus to prevent its denaturation under extreme environmental conditions.</text>
</comment>
<comment type="similarity">
    <text evidence="2">Belongs to the bacterial histone-like protein family.</text>
</comment>
<proteinExistence type="inferred from homology"/>
<name>DBH_UREPA</name>
<sequence>MNAKIKAKTRSQMIDELSKMLNIEKKQTKAFMDTYEAFLILELSRAKEVRLGNIGKFKVSVRAERKGINPKTGETVIIPEKTIPKFTFTKGIKEIINAGISIDNERVSIDDNDFDDDDEFVEEYIVSENN</sequence>
<keyword id="KW-0226">DNA condensation</keyword>
<keyword id="KW-0238">DNA-binding</keyword>
<keyword id="KW-1185">Reference proteome</keyword>